<gene>
    <name evidence="1" type="primary">moaA</name>
    <name type="ordered locus">JJD26997_0176</name>
</gene>
<protein>
    <recommendedName>
        <fullName evidence="1">GTP 3',8-cyclase</fullName>
        <ecNumber evidence="1">4.1.99.22</ecNumber>
    </recommendedName>
    <alternativeName>
        <fullName evidence="1">Molybdenum cofactor biosynthesis protein A</fullName>
    </alternativeName>
</protein>
<feature type="chain" id="PRO_1000054181" description="GTP 3',8-cyclase">
    <location>
        <begin position="1"/>
        <end position="320"/>
    </location>
</feature>
<feature type="domain" description="Radical SAM core" evidence="2">
    <location>
        <begin position="5"/>
        <end position="225"/>
    </location>
</feature>
<feature type="binding site" evidence="1">
    <location>
        <position position="14"/>
    </location>
    <ligand>
        <name>GTP</name>
        <dbReference type="ChEBI" id="CHEBI:37565"/>
    </ligand>
</feature>
<feature type="binding site" evidence="1">
    <location>
        <position position="21"/>
    </location>
    <ligand>
        <name>[4Fe-4S] cluster</name>
        <dbReference type="ChEBI" id="CHEBI:49883"/>
        <label>1</label>
        <note>4Fe-4S-S-AdoMet</note>
    </ligand>
</feature>
<feature type="binding site" evidence="1">
    <location>
        <position position="25"/>
    </location>
    <ligand>
        <name>[4Fe-4S] cluster</name>
        <dbReference type="ChEBI" id="CHEBI:49883"/>
        <label>1</label>
        <note>4Fe-4S-S-AdoMet</note>
    </ligand>
</feature>
<feature type="binding site" evidence="1">
    <location>
        <position position="27"/>
    </location>
    <ligand>
        <name>S-adenosyl-L-methionine</name>
        <dbReference type="ChEBI" id="CHEBI:59789"/>
    </ligand>
</feature>
<feature type="binding site" evidence="1">
    <location>
        <position position="28"/>
    </location>
    <ligand>
        <name>[4Fe-4S] cluster</name>
        <dbReference type="ChEBI" id="CHEBI:49883"/>
        <label>1</label>
        <note>4Fe-4S-S-AdoMet</note>
    </ligand>
</feature>
<feature type="binding site" evidence="1">
    <location>
        <position position="64"/>
    </location>
    <ligand>
        <name>GTP</name>
        <dbReference type="ChEBI" id="CHEBI:37565"/>
    </ligand>
</feature>
<feature type="binding site" evidence="1">
    <location>
        <position position="68"/>
    </location>
    <ligand>
        <name>S-adenosyl-L-methionine</name>
        <dbReference type="ChEBI" id="CHEBI:59789"/>
    </ligand>
</feature>
<feature type="binding site" evidence="1">
    <location>
        <position position="95"/>
    </location>
    <ligand>
        <name>GTP</name>
        <dbReference type="ChEBI" id="CHEBI:37565"/>
    </ligand>
</feature>
<feature type="binding site" evidence="1">
    <location>
        <position position="119"/>
    </location>
    <ligand>
        <name>S-adenosyl-L-methionine</name>
        <dbReference type="ChEBI" id="CHEBI:59789"/>
    </ligand>
</feature>
<feature type="binding site" evidence="1">
    <location>
        <position position="155"/>
    </location>
    <ligand>
        <name>GTP</name>
        <dbReference type="ChEBI" id="CHEBI:37565"/>
    </ligand>
</feature>
<feature type="binding site" evidence="1">
    <location>
        <position position="189"/>
    </location>
    <ligand>
        <name>S-adenosyl-L-methionine</name>
        <dbReference type="ChEBI" id="CHEBI:59789"/>
    </ligand>
</feature>
<feature type="binding site" evidence="1">
    <location>
        <position position="248"/>
    </location>
    <ligand>
        <name>[4Fe-4S] cluster</name>
        <dbReference type="ChEBI" id="CHEBI:49883"/>
        <label>2</label>
        <note>4Fe-4S-substrate</note>
    </ligand>
</feature>
<feature type="binding site" evidence="1">
    <location>
        <position position="251"/>
    </location>
    <ligand>
        <name>[4Fe-4S] cluster</name>
        <dbReference type="ChEBI" id="CHEBI:49883"/>
        <label>2</label>
        <note>4Fe-4S-substrate</note>
    </ligand>
</feature>
<feature type="binding site" evidence="1">
    <location>
        <begin position="253"/>
        <end position="255"/>
    </location>
    <ligand>
        <name>GTP</name>
        <dbReference type="ChEBI" id="CHEBI:37565"/>
    </ligand>
</feature>
<feature type="binding site" evidence="1">
    <location>
        <position position="265"/>
    </location>
    <ligand>
        <name>[4Fe-4S] cluster</name>
        <dbReference type="ChEBI" id="CHEBI:49883"/>
        <label>2</label>
        <note>4Fe-4S-substrate</note>
    </ligand>
</feature>
<keyword id="KW-0004">4Fe-4S</keyword>
<keyword id="KW-0342">GTP-binding</keyword>
<keyword id="KW-0408">Iron</keyword>
<keyword id="KW-0411">Iron-sulfur</keyword>
<keyword id="KW-0456">Lyase</keyword>
<keyword id="KW-0479">Metal-binding</keyword>
<keyword id="KW-0501">Molybdenum cofactor biosynthesis</keyword>
<keyword id="KW-0547">Nucleotide-binding</keyword>
<keyword id="KW-0949">S-adenosyl-L-methionine</keyword>
<comment type="function">
    <text evidence="1">Catalyzes the cyclization of GTP to (8S)-3',8-cyclo-7,8-dihydroguanosine 5'-triphosphate.</text>
</comment>
<comment type="catalytic activity">
    <reaction evidence="1">
        <text>GTP + AH2 + S-adenosyl-L-methionine = (8S)-3',8-cyclo-7,8-dihydroguanosine 5'-triphosphate + 5'-deoxyadenosine + L-methionine + A + H(+)</text>
        <dbReference type="Rhea" id="RHEA:49576"/>
        <dbReference type="ChEBI" id="CHEBI:13193"/>
        <dbReference type="ChEBI" id="CHEBI:15378"/>
        <dbReference type="ChEBI" id="CHEBI:17319"/>
        <dbReference type="ChEBI" id="CHEBI:17499"/>
        <dbReference type="ChEBI" id="CHEBI:37565"/>
        <dbReference type="ChEBI" id="CHEBI:57844"/>
        <dbReference type="ChEBI" id="CHEBI:59789"/>
        <dbReference type="ChEBI" id="CHEBI:131766"/>
        <dbReference type="EC" id="4.1.99.22"/>
    </reaction>
</comment>
<comment type="cofactor">
    <cofactor evidence="1">
        <name>[4Fe-4S] cluster</name>
        <dbReference type="ChEBI" id="CHEBI:49883"/>
    </cofactor>
    <text evidence="1">Binds 2 [4Fe-4S] clusters. Binds 1 [4Fe-4S] cluster coordinated with 3 cysteines and an exchangeable S-adenosyl-L-methionine and 1 [4Fe-4S] cluster coordinated with 3 cysteines and the GTP-derived substrate.</text>
</comment>
<comment type="pathway">
    <text evidence="1">Cofactor biosynthesis; molybdopterin biosynthesis.</text>
</comment>
<comment type="subunit">
    <text evidence="1">Monomer and homodimer.</text>
</comment>
<comment type="similarity">
    <text evidence="1">Belongs to the radical SAM superfamily. MoaA family.</text>
</comment>
<accession>A7H1N9</accession>
<organism>
    <name type="scientific">Campylobacter jejuni subsp. doylei (strain ATCC BAA-1458 / RM4099 / 269.97)</name>
    <dbReference type="NCBI Taxonomy" id="360109"/>
    <lineage>
        <taxon>Bacteria</taxon>
        <taxon>Pseudomonadati</taxon>
        <taxon>Campylobacterota</taxon>
        <taxon>Epsilonproteobacteria</taxon>
        <taxon>Campylobacterales</taxon>
        <taxon>Campylobacteraceae</taxon>
        <taxon>Campylobacter</taxon>
    </lineage>
</organism>
<sequence>MLIDQFDRKINYLRISVTQRCNFRCLYCMPKIPFDYQPKENLLSFEELFLFVKATIDEGIEKIRITGGEPLLRKDLSIFIKMISDYKSDIDLAITTNGFLLKDFAKDLKNAGLKRLNISLDTLDHKKAKTLAQKDVLDSVLSGIDEALNLDLKVKLNTVALKNLNDDELISLLEFAKSKKAQIRFIEFMENTHAYGKLQGLKRDEIIQILSQKYQIQLIKKDEKAPVSIYKADDYEFGIIDPHSHEFCDSCNRIRLSAEGLLIPCLYFDEASSIKEAVRKGDIKAAVEILQEVLRNKPEKNKWSVVDNETSSRAFYQTGG</sequence>
<reference key="1">
    <citation type="submission" date="2007-07" db="EMBL/GenBank/DDBJ databases">
        <title>Complete genome sequence of Campylobacter jejuni subsp doylei 269.97 isolated from human blood.</title>
        <authorList>
            <person name="Fouts D.E."/>
            <person name="Mongodin E.F."/>
            <person name="Puiu D."/>
            <person name="Sebastian Y."/>
            <person name="Miller W.G."/>
            <person name="Mandrell R.E."/>
            <person name="Lastovica A.J."/>
            <person name="Nelson K.E."/>
        </authorList>
    </citation>
    <scope>NUCLEOTIDE SEQUENCE [LARGE SCALE GENOMIC DNA]</scope>
    <source>
        <strain>ATCC BAA-1458 / RM4099 / 269.97</strain>
    </source>
</reference>
<proteinExistence type="inferred from homology"/>
<evidence type="ECO:0000255" key="1">
    <source>
        <dbReference type="HAMAP-Rule" id="MF_01225"/>
    </source>
</evidence>
<evidence type="ECO:0000255" key="2">
    <source>
        <dbReference type="PROSITE-ProRule" id="PRU01266"/>
    </source>
</evidence>
<name>MOAA_CAMJD</name>
<dbReference type="EC" id="4.1.99.22" evidence="1"/>
<dbReference type="EMBL" id="CP000768">
    <property type="protein sequence ID" value="ABS44219.1"/>
    <property type="molecule type" value="Genomic_DNA"/>
</dbReference>
<dbReference type="SMR" id="A7H1N9"/>
<dbReference type="KEGG" id="cjd:JJD26997_0176"/>
<dbReference type="HOGENOM" id="CLU_009273_0_1_7"/>
<dbReference type="UniPathway" id="UPA00344"/>
<dbReference type="Proteomes" id="UP000002302">
    <property type="component" value="Chromosome"/>
</dbReference>
<dbReference type="GO" id="GO:0051539">
    <property type="term" value="F:4 iron, 4 sulfur cluster binding"/>
    <property type="evidence" value="ECO:0007669"/>
    <property type="project" value="UniProtKB-UniRule"/>
</dbReference>
<dbReference type="GO" id="GO:0061799">
    <property type="term" value="F:cyclic pyranopterin monophosphate synthase activity"/>
    <property type="evidence" value="ECO:0007669"/>
    <property type="project" value="TreeGrafter"/>
</dbReference>
<dbReference type="GO" id="GO:0061798">
    <property type="term" value="F:GTP 3',8'-cyclase activity"/>
    <property type="evidence" value="ECO:0007669"/>
    <property type="project" value="UniProtKB-UniRule"/>
</dbReference>
<dbReference type="GO" id="GO:0005525">
    <property type="term" value="F:GTP binding"/>
    <property type="evidence" value="ECO:0007669"/>
    <property type="project" value="UniProtKB-UniRule"/>
</dbReference>
<dbReference type="GO" id="GO:0046872">
    <property type="term" value="F:metal ion binding"/>
    <property type="evidence" value="ECO:0007669"/>
    <property type="project" value="UniProtKB-KW"/>
</dbReference>
<dbReference type="GO" id="GO:1904047">
    <property type="term" value="F:S-adenosyl-L-methionine binding"/>
    <property type="evidence" value="ECO:0007669"/>
    <property type="project" value="UniProtKB-UniRule"/>
</dbReference>
<dbReference type="GO" id="GO:0006777">
    <property type="term" value="P:Mo-molybdopterin cofactor biosynthetic process"/>
    <property type="evidence" value="ECO:0007669"/>
    <property type="project" value="UniProtKB-UniRule"/>
</dbReference>
<dbReference type="CDD" id="cd01335">
    <property type="entry name" value="Radical_SAM"/>
    <property type="match status" value="1"/>
</dbReference>
<dbReference type="CDD" id="cd21117">
    <property type="entry name" value="Twitch_MoaA"/>
    <property type="match status" value="1"/>
</dbReference>
<dbReference type="Gene3D" id="3.20.20.70">
    <property type="entry name" value="Aldolase class I"/>
    <property type="match status" value="1"/>
</dbReference>
<dbReference type="HAMAP" id="MF_01225_B">
    <property type="entry name" value="MoaA_B"/>
    <property type="match status" value="1"/>
</dbReference>
<dbReference type="InterPro" id="IPR013785">
    <property type="entry name" value="Aldolase_TIM"/>
</dbReference>
<dbReference type="InterPro" id="IPR006638">
    <property type="entry name" value="Elp3/MiaA/NifB-like_rSAM"/>
</dbReference>
<dbReference type="InterPro" id="IPR013483">
    <property type="entry name" value="MoaA"/>
</dbReference>
<dbReference type="InterPro" id="IPR000385">
    <property type="entry name" value="MoaA_NifB_PqqE_Fe-S-bd_CS"/>
</dbReference>
<dbReference type="InterPro" id="IPR010505">
    <property type="entry name" value="MoaA_twitch"/>
</dbReference>
<dbReference type="InterPro" id="IPR050105">
    <property type="entry name" value="MoCo_biosynth_MoaA/MoaC"/>
</dbReference>
<dbReference type="InterPro" id="IPR007197">
    <property type="entry name" value="rSAM"/>
</dbReference>
<dbReference type="NCBIfam" id="TIGR02666">
    <property type="entry name" value="moaA"/>
    <property type="match status" value="1"/>
</dbReference>
<dbReference type="PANTHER" id="PTHR22960:SF0">
    <property type="entry name" value="MOLYBDENUM COFACTOR BIOSYNTHESIS PROTEIN 1"/>
    <property type="match status" value="1"/>
</dbReference>
<dbReference type="PANTHER" id="PTHR22960">
    <property type="entry name" value="MOLYBDOPTERIN COFACTOR SYNTHESIS PROTEIN A"/>
    <property type="match status" value="1"/>
</dbReference>
<dbReference type="Pfam" id="PF13353">
    <property type="entry name" value="Fer4_12"/>
    <property type="match status" value="1"/>
</dbReference>
<dbReference type="Pfam" id="PF06463">
    <property type="entry name" value="Mob_synth_C"/>
    <property type="match status" value="1"/>
</dbReference>
<dbReference type="Pfam" id="PF04055">
    <property type="entry name" value="Radical_SAM"/>
    <property type="match status" value="1"/>
</dbReference>
<dbReference type="SFLD" id="SFLDG01383">
    <property type="entry name" value="cyclic_pyranopterin_phosphate"/>
    <property type="match status" value="1"/>
</dbReference>
<dbReference type="SFLD" id="SFLDG01386">
    <property type="entry name" value="main_SPASM_domain-containing"/>
    <property type="match status" value="1"/>
</dbReference>
<dbReference type="SMART" id="SM00729">
    <property type="entry name" value="Elp3"/>
    <property type="match status" value="1"/>
</dbReference>
<dbReference type="SUPFAM" id="SSF102114">
    <property type="entry name" value="Radical SAM enzymes"/>
    <property type="match status" value="1"/>
</dbReference>
<dbReference type="PROSITE" id="PS01305">
    <property type="entry name" value="MOAA_NIFB_PQQE"/>
    <property type="match status" value="1"/>
</dbReference>
<dbReference type="PROSITE" id="PS51918">
    <property type="entry name" value="RADICAL_SAM"/>
    <property type="match status" value="1"/>
</dbReference>